<gene>
    <name evidence="1" type="primary">rpsG</name>
    <name type="ordered locus">HP_1196</name>
</gene>
<comment type="function">
    <text evidence="1">One of the primary rRNA binding proteins, it binds directly to 16S rRNA where it nucleates assembly of the head domain of the 30S subunit. Is located at the subunit interface close to the decoding center, probably blocks exit of the E-site tRNA.</text>
</comment>
<comment type="subunit">
    <text evidence="1">Part of the 30S ribosomal subunit. Contacts proteins S9 and S11.</text>
</comment>
<comment type="similarity">
    <text evidence="1">Belongs to the universal ribosomal protein uS7 family.</text>
</comment>
<dbReference type="EMBL" id="AE000511">
    <property type="protein sequence ID" value="AAD08240.1"/>
    <property type="molecule type" value="Genomic_DNA"/>
</dbReference>
<dbReference type="PIR" id="D64669">
    <property type="entry name" value="D64669"/>
</dbReference>
<dbReference type="RefSeq" id="NP_207987.1">
    <property type="nucleotide sequence ID" value="NC_000915.1"/>
</dbReference>
<dbReference type="RefSeq" id="WP_001254357.1">
    <property type="nucleotide sequence ID" value="NC_018939.1"/>
</dbReference>
<dbReference type="SMR" id="P66609"/>
<dbReference type="FunCoup" id="P66609">
    <property type="interactions" value="441"/>
</dbReference>
<dbReference type="IntAct" id="P66609">
    <property type="interactions" value="2"/>
</dbReference>
<dbReference type="MINT" id="P66609"/>
<dbReference type="STRING" id="85962.HP_1196"/>
<dbReference type="PaxDb" id="85962-C694_06185"/>
<dbReference type="DNASU" id="899958"/>
<dbReference type="EnsemblBacteria" id="AAD08240">
    <property type="protein sequence ID" value="AAD08240"/>
    <property type="gene ID" value="HP_1196"/>
</dbReference>
<dbReference type="GeneID" id="31758828"/>
<dbReference type="KEGG" id="heo:C694_06185"/>
<dbReference type="KEGG" id="hpy:HP_1196"/>
<dbReference type="PATRIC" id="fig|85962.47.peg.1285"/>
<dbReference type="eggNOG" id="COG0049">
    <property type="taxonomic scope" value="Bacteria"/>
</dbReference>
<dbReference type="InParanoid" id="P66609"/>
<dbReference type="OrthoDB" id="9807653at2"/>
<dbReference type="PhylomeDB" id="P66609"/>
<dbReference type="Proteomes" id="UP000000429">
    <property type="component" value="Chromosome"/>
</dbReference>
<dbReference type="GO" id="GO:0022627">
    <property type="term" value="C:cytosolic small ribosomal subunit"/>
    <property type="evidence" value="ECO:0000318"/>
    <property type="project" value="GO_Central"/>
</dbReference>
<dbReference type="GO" id="GO:0005840">
    <property type="term" value="C:ribosome"/>
    <property type="evidence" value="ECO:0000318"/>
    <property type="project" value="GO_Central"/>
</dbReference>
<dbReference type="GO" id="GO:0003729">
    <property type="term" value="F:mRNA binding"/>
    <property type="evidence" value="ECO:0000318"/>
    <property type="project" value="GO_Central"/>
</dbReference>
<dbReference type="GO" id="GO:0019843">
    <property type="term" value="F:rRNA binding"/>
    <property type="evidence" value="ECO:0000318"/>
    <property type="project" value="GO_Central"/>
</dbReference>
<dbReference type="GO" id="GO:0003735">
    <property type="term" value="F:structural constituent of ribosome"/>
    <property type="evidence" value="ECO:0000318"/>
    <property type="project" value="GO_Central"/>
</dbReference>
<dbReference type="GO" id="GO:0000049">
    <property type="term" value="F:tRNA binding"/>
    <property type="evidence" value="ECO:0007669"/>
    <property type="project" value="UniProtKB-UniRule"/>
</dbReference>
<dbReference type="GO" id="GO:0000028">
    <property type="term" value="P:ribosomal small subunit assembly"/>
    <property type="evidence" value="ECO:0000318"/>
    <property type="project" value="GO_Central"/>
</dbReference>
<dbReference type="GO" id="GO:0006412">
    <property type="term" value="P:translation"/>
    <property type="evidence" value="ECO:0000318"/>
    <property type="project" value="GO_Central"/>
</dbReference>
<dbReference type="CDD" id="cd14869">
    <property type="entry name" value="uS7_Bacteria"/>
    <property type="match status" value="1"/>
</dbReference>
<dbReference type="FunFam" id="1.10.455.10:FF:000001">
    <property type="entry name" value="30S ribosomal protein S7"/>
    <property type="match status" value="1"/>
</dbReference>
<dbReference type="Gene3D" id="1.10.455.10">
    <property type="entry name" value="Ribosomal protein S7 domain"/>
    <property type="match status" value="1"/>
</dbReference>
<dbReference type="HAMAP" id="MF_00480_B">
    <property type="entry name" value="Ribosomal_uS7_B"/>
    <property type="match status" value="1"/>
</dbReference>
<dbReference type="InterPro" id="IPR000235">
    <property type="entry name" value="Ribosomal_uS7"/>
</dbReference>
<dbReference type="InterPro" id="IPR005717">
    <property type="entry name" value="Ribosomal_uS7_bac/org-type"/>
</dbReference>
<dbReference type="InterPro" id="IPR020606">
    <property type="entry name" value="Ribosomal_uS7_CS"/>
</dbReference>
<dbReference type="InterPro" id="IPR023798">
    <property type="entry name" value="Ribosomal_uS7_dom"/>
</dbReference>
<dbReference type="InterPro" id="IPR036823">
    <property type="entry name" value="Ribosomal_uS7_dom_sf"/>
</dbReference>
<dbReference type="NCBIfam" id="TIGR01029">
    <property type="entry name" value="rpsG_bact"/>
    <property type="match status" value="1"/>
</dbReference>
<dbReference type="PANTHER" id="PTHR11205">
    <property type="entry name" value="RIBOSOMAL PROTEIN S7"/>
    <property type="match status" value="1"/>
</dbReference>
<dbReference type="Pfam" id="PF00177">
    <property type="entry name" value="Ribosomal_S7"/>
    <property type="match status" value="1"/>
</dbReference>
<dbReference type="PIRSF" id="PIRSF002122">
    <property type="entry name" value="RPS7p_RPS7a_RPS5e_RPS7o"/>
    <property type="match status" value="1"/>
</dbReference>
<dbReference type="SUPFAM" id="SSF47973">
    <property type="entry name" value="Ribosomal protein S7"/>
    <property type="match status" value="1"/>
</dbReference>
<dbReference type="PROSITE" id="PS00052">
    <property type="entry name" value="RIBOSOMAL_S7"/>
    <property type="match status" value="1"/>
</dbReference>
<reference key="1">
    <citation type="journal article" date="1997" name="Nature">
        <title>The complete genome sequence of the gastric pathogen Helicobacter pylori.</title>
        <authorList>
            <person name="Tomb J.-F."/>
            <person name="White O."/>
            <person name="Kerlavage A.R."/>
            <person name="Clayton R.A."/>
            <person name="Sutton G.G."/>
            <person name="Fleischmann R.D."/>
            <person name="Ketchum K.A."/>
            <person name="Klenk H.-P."/>
            <person name="Gill S.R."/>
            <person name="Dougherty B.A."/>
            <person name="Nelson K.E."/>
            <person name="Quackenbush J."/>
            <person name="Zhou L."/>
            <person name="Kirkness E.F."/>
            <person name="Peterson S.N."/>
            <person name="Loftus B.J."/>
            <person name="Richardson D.L."/>
            <person name="Dodson R.J."/>
            <person name="Khalak H.G."/>
            <person name="Glodek A."/>
            <person name="McKenney K."/>
            <person name="FitzGerald L.M."/>
            <person name="Lee N."/>
            <person name="Adams M.D."/>
            <person name="Hickey E.K."/>
            <person name="Berg D.E."/>
            <person name="Gocayne J.D."/>
            <person name="Utterback T.R."/>
            <person name="Peterson J.D."/>
            <person name="Kelley J.M."/>
            <person name="Cotton M.D."/>
            <person name="Weidman J.F."/>
            <person name="Fujii C."/>
            <person name="Bowman C."/>
            <person name="Watthey L."/>
            <person name="Wallin E."/>
            <person name="Hayes W.S."/>
            <person name="Borodovsky M."/>
            <person name="Karp P.D."/>
            <person name="Smith H.O."/>
            <person name="Fraser C.M."/>
            <person name="Venter J.C."/>
        </authorList>
    </citation>
    <scope>NUCLEOTIDE SEQUENCE [LARGE SCALE GENOMIC DNA]</scope>
    <source>
        <strain>ATCC 700392 / 26695</strain>
    </source>
</reference>
<evidence type="ECO:0000255" key="1">
    <source>
        <dbReference type="HAMAP-Rule" id="MF_00480"/>
    </source>
</evidence>
<evidence type="ECO:0000305" key="2"/>
<sequence>MRRRKAPVREVLGDPVYGNKVVTKFINKMMFDGKKSVAEKIIYKAFNKIEEKSGEKGIEVFEKALERVRPLVEVRSRRVGGATYQVPVEVRASRQQSLSIRWILEATRKRNERMMVDRLANELMDAASDKGAAFKKKEDVHKMAEANKAFAHYRW</sequence>
<feature type="chain" id="PRO_0000124273" description="Small ribosomal subunit protein uS7">
    <location>
        <begin position="1"/>
        <end position="155"/>
    </location>
</feature>
<accession>P66609</accession>
<accession>P56014</accession>
<keyword id="KW-1185">Reference proteome</keyword>
<keyword id="KW-0687">Ribonucleoprotein</keyword>
<keyword id="KW-0689">Ribosomal protein</keyword>
<keyword id="KW-0694">RNA-binding</keyword>
<keyword id="KW-0699">rRNA-binding</keyword>
<keyword id="KW-0820">tRNA-binding</keyword>
<name>RS7_HELPY</name>
<proteinExistence type="inferred from homology"/>
<protein>
    <recommendedName>
        <fullName evidence="1">Small ribosomal subunit protein uS7</fullName>
    </recommendedName>
    <alternativeName>
        <fullName evidence="2">30S ribosomal protein S7</fullName>
    </alternativeName>
</protein>
<organism>
    <name type="scientific">Helicobacter pylori (strain ATCC 700392 / 26695)</name>
    <name type="common">Campylobacter pylori</name>
    <dbReference type="NCBI Taxonomy" id="85962"/>
    <lineage>
        <taxon>Bacteria</taxon>
        <taxon>Pseudomonadati</taxon>
        <taxon>Campylobacterota</taxon>
        <taxon>Epsilonproteobacteria</taxon>
        <taxon>Campylobacterales</taxon>
        <taxon>Helicobacteraceae</taxon>
        <taxon>Helicobacter</taxon>
    </lineage>
</organism>